<organism>
    <name type="scientific">Homo sapiens</name>
    <name type="common">Human</name>
    <dbReference type="NCBI Taxonomy" id="9606"/>
    <lineage>
        <taxon>Eukaryota</taxon>
        <taxon>Metazoa</taxon>
        <taxon>Chordata</taxon>
        <taxon>Craniata</taxon>
        <taxon>Vertebrata</taxon>
        <taxon>Euteleostomi</taxon>
        <taxon>Mammalia</taxon>
        <taxon>Eutheria</taxon>
        <taxon>Euarchontoglires</taxon>
        <taxon>Primates</taxon>
        <taxon>Haplorrhini</taxon>
        <taxon>Catarrhini</taxon>
        <taxon>Hominidae</taxon>
        <taxon>Homo</taxon>
    </lineage>
</organism>
<protein>
    <recommendedName>
        <fullName>UPF0193 protein EVG1</fullName>
    </recommendedName>
</protein>
<evidence type="ECO:0000305" key="1"/>
<name>EVG1_HUMAN</name>
<gene>
    <name type="primary">C22orf23</name>
</gene>
<sequence length="217" mass="24956">MASQKQMEVVTKGTGFRRRPKTITYTPGTCELLRVMMKESKLTNIQQRHIMDIMKRGDALPLQCSPTSSQRVLPSKQIASPIYLPPILAARPHLRPANMCQANGAYSREQFKPQATRDLEKEKQRLQNIFATGKDMEERKRKAPPARQKAPAPELDRFEELVKEIQERKEFLADMEALGQGKQYRGIILAEISQKLREMEDIDHRRSEELRKGLATT</sequence>
<keyword id="KW-1185">Reference proteome</keyword>
<proteinExistence type="evidence at protein level"/>
<comment type="interaction">
    <interactant intactId="EBI-10303102">
        <id>Q9BZE7</id>
    </interactant>
    <interactant intactId="EBI-12049899">
        <id>Q96LT6</id>
        <label>C1orf74</label>
    </interactant>
    <organismsDiffer>false</organismsDiffer>
    <experiments>3</experiments>
</comment>
<comment type="interaction">
    <interactant intactId="EBI-10303102">
        <id>Q9BZE7</id>
    </interactant>
    <interactant intactId="EBI-748961">
        <id>O95273</id>
        <label>CCNDBP1</label>
    </interactant>
    <organismsDiffer>false</organismsDiffer>
    <experiments>5</experiments>
</comment>
<comment type="interaction">
    <interactant intactId="EBI-10303102">
        <id>Q9BZE7</id>
    </interactant>
    <interactant intactId="EBI-12001340">
        <id>P62508-3</id>
        <label>ESRRG</label>
    </interactant>
    <organismsDiffer>false</organismsDiffer>
    <experiments>3</experiments>
</comment>
<comment type="interaction">
    <interactant intactId="EBI-10303102">
        <id>Q9BZE7</id>
    </interactant>
    <interactant intactId="EBI-727424">
        <id>Q9UK41</id>
        <label>VPS28</label>
    </interactant>
    <organismsDiffer>false</organismsDiffer>
    <experiments>2</experiments>
</comment>
<comment type="similarity">
    <text evidence="1">Belongs to the UPF0193 (EVG1) family.</text>
</comment>
<dbReference type="EMBL" id="AF324466">
    <property type="protein sequence ID" value="AAK07640.1"/>
    <property type="molecule type" value="mRNA"/>
</dbReference>
<dbReference type="EMBL" id="AK057349">
    <property type="protein sequence ID" value="BAB71442.1"/>
    <property type="molecule type" value="mRNA"/>
</dbReference>
<dbReference type="EMBL" id="CR456440">
    <property type="protein sequence ID" value="CAG30326.1"/>
    <property type="molecule type" value="mRNA"/>
</dbReference>
<dbReference type="EMBL" id="AL031587">
    <property type="status" value="NOT_ANNOTATED_CDS"/>
    <property type="molecule type" value="Genomic_DNA"/>
</dbReference>
<dbReference type="EMBL" id="CH471095">
    <property type="protein sequence ID" value="EAW60200.1"/>
    <property type="molecule type" value="Genomic_DNA"/>
</dbReference>
<dbReference type="EMBL" id="BC031998">
    <property type="protein sequence ID" value="AAH31998.1"/>
    <property type="molecule type" value="mRNA"/>
</dbReference>
<dbReference type="CCDS" id="CCDS13962.1"/>
<dbReference type="RefSeq" id="NP_001193991.1">
    <property type="nucleotide sequence ID" value="NM_001207062.1"/>
</dbReference>
<dbReference type="RefSeq" id="NP_115950.3">
    <property type="nucleotide sequence ID" value="NM_032561.4"/>
</dbReference>
<dbReference type="RefSeq" id="XP_047297506.1">
    <property type="nucleotide sequence ID" value="XM_047441550.1"/>
</dbReference>
<dbReference type="RefSeq" id="XP_054182009.1">
    <property type="nucleotide sequence ID" value="XM_054326034.1"/>
</dbReference>
<dbReference type="SMR" id="Q9BZE7"/>
<dbReference type="BioGRID" id="124168">
    <property type="interactions" value="10"/>
</dbReference>
<dbReference type="FunCoup" id="Q9BZE7">
    <property type="interactions" value="5"/>
</dbReference>
<dbReference type="IntAct" id="Q9BZE7">
    <property type="interactions" value="8"/>
</dbReference>
<dbReference type="MINT" id="Q9BZE7"/>
<dbReference type="STRING" id="9606.ENSP00000384667"/>
<dbReference type="iPTMnet" id="Q9BZE7"/>
<dbReference type="PhosphoSitePlus" id="Q9BZE7"/>
<dbReference type="BioMuta" id="C22orf23"/>
<dbReference type="DMDM" id="20177878"/>
<dbReference type="MassIVE" id="Q9BZE7"/>
<dbReference type="PaxDb" id="9606-ENSP00000249079"/>
<dbReference type="PeptideAtlas" id="Q9BZE7"/>
<dbReference type="Antibodypedia" id="258">
    <property type="antibodies" value="46 antibodies from 15 providers"/>
</dbReference>
<dbReference type="DNASU" id="84645"/>
<dbReference type="Ensembl" id="ENST00000249079.6">
    <property type="protein sequence ID" value="ENSP00000249079.2"/>
    <property type="gene ID" value="ENSG00000128346.11"/>
</dbReference>
<dbReference type="Ensembl" id="ENST00000403026.5">
    <property type="protein sequence ID" value="ENSP00000384618.1"/>
    <property type="gene ID" value="ENSG00000128346.11"/>
</dbReference>
<dbReference type="Ensembl" id="ENST00000403305.6">
    <property type="protein sequence ID" value="ENSP00000384667.1"/>
    <property type="gene ID" value="ENSG00000128346.11"/>
</dbReference>
<dbReference type="GeneID" id="84645"/>
<dbReference type="KEGG" id="hsa:84645"/>
<dbReference type="MANE-Select" id="ENST00000403305.6">
    <property type="protein sequence ID" value="ENSP00000384667.1"/>
    <property type="RefSeq nucleotide sequence ID" value="NM_032561.5"/>
    <property type="RefSeq protein sequence ID" value="NP_115950.3"/>
</dbReference>
<dbReference type="UCSC" id="uc003auj.3">
    <property type="organism name" value="human"/>
</dbReference>
<dbReference type="AGR" id="HGNC:18589"/>
<dbReference type="CTD" id="84645"/>
<dbReference type="GeneCards" id="C22orf23"/>
<dbReference type="HGNC" id="HGNC:18589">
    <property type="gene designation" value="C22orf23"/>
</dbReference>
<dbReference type="HPA" id="ENSG00000128346">
    <property type="expression patterns" value="Group enriched (skin, testis)"/>
</dbReference>
<dbReference type="MIM" id="619678">
    <property type="type" value="gene"/>
</dbReference>
<dbReference type="neXtProt" id="NX_Q9BZE7"/>
<dbReference type="OpenTargets" id="ENSG00000128346"/>
<dbReference type="PharmGKB" id="PA38355"/>
<dbReference type="VEuPathDB" id="HostDB:ENSG00000128346"/>
<dbReference type="eggNOG" id="ENOG502RYD0">
    <property type="taxonomic scope" value="Eukaryota"/>
</dbReference>
<dbReference type="GeneTree" id="ENSGT00390000010231"/>
<dbReference type="HOGENOM" id="CLU_081328_0_0_1"/>
<dbReference type="InParanoid" id="Q9BZE7"/>
<dbReference type="OMA" id="MMAYGKD"/>
<dbReference type="OrthoDB" id="189770at2759"/>
<dbReference type="PAN-GO" id="Q9BZE7">
    <property type="GO annotations" value="0 GO annotations based on evolutionary models"/>
</dbReference>
<dbReference type="PhylomeDB" id="Q9BZE7"/>
<dbReference type="TreeFam" id="TF323579"/>
<dbReference type="PathwayCommons" id="Q9BZE7"/>
<dbReference type="SignaLink" id="Q9BZE7"/>
<dbReference type="BioGRID-ORCS" id="84645">
    <property type="hits" value="17 hits in 1129 CRISPR screens"/>
</dbReference>
<dbReference type="ChiTaRS" id="C22orf23">
    <property type="organism name" value="human"/>
</dbReference>
<dbReference type="GenomeRNAi" id="84645"/>
<dbReference type="Pharos" id="Q9BZE7">
    <property type="development level" value="Tdark"/>
</dbReference>
<dbReference type="PRO" id="PR:Q9BZE7"/>
<dbReference type="Proteomes" id="UP000005640">
    <property type="component" value="Chromosome 22"/>
</dbReference>
<dbReference type="RNAct" id="Q9BZE7">
    <property type="molecule type" value="protein"/>
</dbReference>
<dbReference type="Bgee" id="ENSG00000128346">
    <property type="expression patterns" value="Expressed in left testis and 105 other cell types or tissues"/>
</dbReference>
<dbReference type="ExpressionAtlas" id="Q9BZE7">
    <property type="expression patterns" value="baseline and differential"/>
</dbReference>
<dbReference type="InterPro" id="IPR007914">
    <property type="entry name" value="UPF0193"/>
</dbReference>
<dbReference type="PANTHER" id="PTHR28348">
    <property type="entry name" value="UPF0193 PROTEIN EVG1"/>
    <property type="match status" value="1"/>
</dbReference>
<dbReference type="PANTHER" id="PTHR28348:SF1">
    <property type="entry name" value="UPF0193 PROTEIN EVG1"/>
    <property type="match status" value="1"/>
</dbReference>
<dbReference type="Pfam" id="PF05250">
    <property type="entry name" value="UPF0193"/>
    <property type="match status" value="1"/>
</dbReference>
<accession>Q9BZE7</accession>
<accession>Q5JYU9</accession>
<accession>Q96M68</accession>
<reference key="1">
    <citation type="journal article" date="2001" name="Nature">
        <title>Experimental annotation of the human genome using microarray technology.</title>
        <authorList>
            <person name="Shoemaker D.D."/>
            <person name="Schadt E.E."/>
            <person name="Armour C.D."/>
            <person name="He Y.D."/>
            <person name="Garrett-Engele P."/>
            <person name="McDonagh P.D."/>
            <person name="Loerch P.M."/>
            <person name="Leonardson A."/>
            <person name="Lum P.Y."/>
            <person name="Cavet G."/>
            <person name="Wu L.F."/>
            <person name="Altschuler S.J."/>
            <person name="Edwards S."/>
            <person name="King J."/>
            <person name="Tsang J.S."/>
            <person name="Schimmack G."/>
            <person name="Schelter J.M."/>
            <person name="Koch J."/>
            <person name="Ziman M."/>
            <person name="Marton M.J."/>
            <person name="Li B."/>
            <person name="Cundiff P."/>
            <person name="Ward T."/>
            <person name="Castle J."/>
            <person name="Krolewski M."/>
            <person name="Meyer M.R."/>
            <person name="Mao M."/>
            <person name="Burchard J."/>
            <person name="Kidd M.J."/>
            <person name="Dai H."/>
            <person name="Phillips J.W."/>
            <person name="Linsley P.S."/>
            <person name="Stoughton R."/>
            <person name="Scherer S."/>
            <person name="Boguski M.S."/>
        </authorList>
    </citation>
    <scope>NUCLEOTIDE SEQUENCE [MRNA]</scope>
    <source>
        <tissue>Testis</tissue>
    </source>
</reference>
<reference key="2">
    <citation type="journal article" date="2004" name="Nat. Genet.">
        <title>Complete sequencing and characterization of 21,243 full-length human cDNAs.</title>
        <authorList>
            <person name="Ota T."/>
            <person name="Suzuki Y."/>
            <person name="Nishikawa T."/>
            <person name="Otsuki T."/>
            <person name="Sugiyama T."/>
            <person name="Irie R."/>
            <person name="Wakamatsu A."/>
            <person name="Hayashi K."/>
            <person name="Sato H."/>
            <person name="Nagai K."/>
            <person name="Kimura K."/>
            <person name="Makita H."/>
            <person name="Sekine M."/>
            <person name="Obayashi M."/>
            <person name="Nishi T."/>
            <person name="Shibahara T."/>
            <person name="Tanaka T."/>
            <person name="Ishii S."/>
            <person name="Yamamoto J."/>
            <person name="Saito K."/>
            <person name="Kawai Y."/>
            <person name="Isono Y."/>
            <person name="Nakamura Y."/>
            <person name="Nagahari K."/>
            <person name="Murakami K."/>
            <person name="Yasuda T."/>
            <person name="Iwayanagi T."/>
            <person name="Wagatsuma M."/>
            <person name="Shiratori A."/>
            <person name="Sudo H."/>
            <person name="Hosoiri T."/>
            <person name="Kaku Y."/>
            <person name="Kodaira H."/>
            <person name="Kondo H."/>
            <person name="Sugawara M."/>
            <person name="Takahashi M."/>
            <person name="Kanda K."/>
            <person name="Yokoi T."/>
            <person name="Furuya T."/>
            <person name="Kikkawa E."/>
            <person name="Omura Y."/>
            <person name="Abe K."/>
            <person name="Kamihara K."/>
            <person name="Katsuta N."/>
            <person name="Sato K."/>
            <person name="Tanikawa M."/>
            <person name="Yamazaki M."/>
            <person name="Ninomiya K."/>
            <person name="Ishibashi T."/>
            <person name="Yamashita H."/>
            <person name="Murakawa K."/>
            <person name="Fujimori K."/>
            <person name="Tanai H."/>
            <person name="Kimata M."/>
            <person name="Watanabe M."/>
            <person name="Hiraoka S."/>
            <person name="Chiba Y."/>
            <person name="Ishida S."/>
            <person name="Ono Y."/>
            <person name="Takiguchi S."/>
            <person name="Watanabe S."/>
            <person name="Yosida M."/>
            <person name="Hotuta T."/>
            <person name="Kusano J."/>
            <person name="Kanehori K."/>
            <person name="Takahashi-Fujii A."/>
            <person name="Hara H."/>
            <person name="Tanase T.-O."/>
            <person name="Nomura Y."/>
            <person name="Togiya S."/>
            <person name="Komai F."/>
            <person name="Hara R."/>
            <person name="Takeuchi K."/>
            <person name="Arita M."/>
            <person name="Imose N."/>
            <person name="Musashino K."/>
            <person name="Yuuki H."/>
            <person name="Oshima A."/>
            <person name="Sasaki N."/>
            <person name="Aotsuka S."/>
            <person name="Yoshikawa Y."/>
            <person name="Matsunawa H."/>
            <person name="Ichihara T."/>
            <person name="Shiohata N."/>
            <person name="Sano S."/>
            <person name="Moriya S."/>
            <person name="Momiyama H."/>
            <person name="Satoh N."/>
            <person name="Takami S."/>
            <person name="Terashima Y."/>
            <person name="Suzuki O."/>
            <person name="Nakagawa S."/>
            <person name="Senoh A."/>
            <person name="Mizoguchi H."/>
            <person name="Goto Y."/>
            <person name="Shimizu F."/>
            <person name="Wakebe H."/>
            <person name="Hishigaki H."/>
            <person name="Watanabe T."/>
            <person name="Sugiyama A."/>
            <person name="Takemoto M."/>
            <person name="Kawakami B."/>
            <person name="Yamazaki M."/>
            <person name="Watanabe K."/>
            <person name="Kumagai A."/>
            <person name="Itakura S."/>
            <person name="Fukuzumi Y."/>
            <person name="Fujimori Y."/>
            <person name="Komiyama M."/>
            <person name="Tashiro H."/>
            <person name="Tanigami A."/>
            <person name="Fujiwara T."/>
            <person name="Ono T."/>
            <person name="Yamada K."/>
            <person name="Fujii Y."/>
            <person name="Ozaki K."/>
            <person name="Hirao M."/>
            <person name="Ohmori Y."/>
            <person name="Kawabata A."/>
            <person name="Hikiji T."/>
            <person name="Kobatake N."/>
            <person name="Inagaki H."/>
            <person name="Ikema Y."/>
            <person name="Okamoto S."/>
            <person name="Okitani R."/>
            <person name="Kawakami T."/>
            <person name="Noguchi S."/>
            <person name="Itoh T."/>
            <person name="Shigeta K."/>
            <person name="Senba T."/>
            <person name="Matsumura K."/>
            <person name="Nakajima Y."/>
            <person name="Mizuno T."/>
            <person name="Morinaga M."/>
            <person name="Sasaki M."/>
            <person name="Togashi T."/>
            <person name="Oyama M."/>
            <person name="Hata H."/>
            <person name="Watanabe M."/>
            <person name="Komatsu T."/>
            <person name="Mizushima-Sugano J."/>
            <person name="Satoh T."/>
            <person name="Shirai Y."/>
            <person name="Takahashi Y."/>
            <person name="Nakagawa K."/>
            <person name="Okumura K."/>
            <person name="Nagase T."/>
            <person name="Nomura N."/>
            <person name="Kikuchi H."/>
            <person name="Masuho Y."/>
            <person name="Yamashita R."/>
            <person name="Nakai K."/>
            <person name="Yada T."/>
            <person name="Nakamura Y."/>
            <person name="Ohara O."/>
            <person name="Isogai T."/>
            <person name="Sugano S."/>
        </authorList>
    </citation>
    <scope>NUCLEOTIDE SEQUENCE [LARGE SCALE MRNA]</scope>
    <source>
        <tissue>Testis</tissue>
    </source>
</reference>
<reference key="3">
    <citation type="journal article" date="2004" name="Genome Biol.">
        <title>A genome annotation-driven approach to cloning the human ORFeome.</title>
        <authorList>
            <person name="Collins J.E."/>
            <person name="Wright C.L."/>
            <person name="Edwards C.A."/>
            <person name="Davis M.P."/>
            <person name="Grinham J.A."/>
            <person name="Cole C.G."/>
            <person name="Goward M.E."/>
            <person name="Aguado B."/>
            <person name="Mallya M."/>
            <person name="Mokrab Y."/>
            <person name="Huckle E.J."/>
            <person name="Beare D.M."/>
            <person name="Dunham I."/>
        </authorList>
    </citation>
    <scope>NUCLEOTIDE SEQUENCE [LARGE SCALE MRNA]</scope>
</reference>
<reference key="4">
    <citation type="journal article" date="1999" name="Nature">
        <title>The DNA sequence of human chromosome 22.</title>
        <authorList>
            <person name="Dunham I."/>
            <person name="Hunt A.R."/>
            <person name="Collins J.E."/>
            <person name="Bruskiewich R."/>
            <person name="Beare D.M."/>
            <person name="Clamp M."/>
            <person name="Smink L.J."/>
            <person name="Ainscough R."/>
            <person name="Almeida J.P."/>
            <person name="Babbage A.K."/>
            <person name="Bagguley C."/>
            <person name="Bailey J."/>
            <person name="Barlow K.F."/>
            <person name="Bates K.N."/>
            <person name="Beasley O.P."/>
            <person name="Bird C.P."/>
            <person name="Blakey S.E."/>
            <person name="Bridgeman A.M."/>
            <person name="Buck D."/>
            <person name="Burgess J."/>
            <person name="Burrill W.D."/>
            <person name="Burton J."/>
            <person name="Carder C."/>
            <person name="Carter N.P."/>
            <person name="Chen Y."/>
            <person name="Clark G."/>
            <person name="Clegg S.M."/>
            <person name="Cobley V.E."/>
            <person name="Cole C.G."/>
            <person name="Collier R.E."/>
            <person name="Connor R."/>
            <person name="Conroy D."/>
            <person name="Corby N.R."/>
            <person name="Coville G.J."/>
            <person name="Cox A.V."/>
            <person name="Davis J."/>
            <person name="Dawson E."/>
            <person name="Dhami P.D."/>
            <person name="Dockree C."/>
            <person name="Dodsworth S.J."/>
            <person name="Durbin R.M."/>
            <person name="Ellington A.G."/>
            <person name="Evans K.L."/>
            <person name="Fey J.M."/>
            <person name="Fleming K."/>
            <person name="French L."/>
            <person name="Garner A.A."/>
            <person name="Gilbert J.G.R."/>
            <person name="Goward M.E."/>
            <person name="Grafham D.V."/>
            <person name="Griffiths M.N.D."/>
            <person name="Hall C."/>
            <person name="Hall R.E."/>
            <person name="Hall-Tamlyn G."/>
            <person name="Heathcott R.W."/>
            <person name="Ho S."/>
            <person name="Holmes S."/>
            <person name="Hunt S.E."/>
            <person name="Jones M.C."/>
            <person name="Kershaw J."/>
            <person name="Kimberley A.M."/>
            <person name="King A."/>
            <person name="Laird G.K."/>
            <person name="Langford C.F."/>
            <person name="Leversha M.A."/>
            <person name="Lloyd C."/>
            <person name="Lloyd D.M."/>
            <person name="Martyn I.D."/>
            <person name="Mashreghi-Mohammadi M."/>
            <person name="Matthews L.H."/>
            <person name="Mccann O.T."/>
            <person name="Mcclay J."/>
            <person name="Mclaren S."/>
            <person name="McMurray A.A."/>
            <person name="Milne S.A."/>
            <person name="Mortimore B.J."/>
            <person name="Odell C.N."/>
            <person name="Pavitt R."/>
            <person name="Pearce A.V."/>
            <person name="Pearson D."/>
            <person name="Phillimore B.J.C.T."/>
            <person name="Phillips S.H."/>
            <person name="Plumb R.W."/>
            <person name="Ramsay H."/>
            <person name="Ramsey Y."/>
            <person name="Rogers L."/>
            <person name="Ross M.T."/>
            <person name="Scott C.E."/>
            <person name="Sehra H.K."/>
            <person name="Skuce C.D."/>
            <person name="Smalley S."/>
            <person name="Smith M.L."/>
            <person name="Soderlund C."/>
            <person name="Spragon L."/>
            <person name="Steward C.A."/>
            <person name="Sulston J.E."/>
            <person name="Swann R.M."/>
            <person name="Vaudin M."/>
            <person name="Wall M."/>
            <person name="Wallis J.M."/>
            <person name="Whiteley M.N."/>
            <person name="Willey D.L."/>
            <person name="Williams L."/>
            <person name="Williams S.A."/>
            <person name="Williamson H."/>
            <person name="Wilmer T.E."/>
            <person name="Wilming L."/>
            <person name="Wright C.L."/>
            <person name="Hubbard T."/>
            <person name="Bentley D.R."/>
            <person name="Beck S."/>
            <person name="Rogers J."/>
            <person name="Shimizu N."/>
            <person name="Minoshima S."/>
            <person name="Kawasaki K."/>
            <person name="Sasaki T."/>
            <person name="Asakawa S."/>
            <person name="Kudoh J."/>
            <person name="Shintani A."/>
            <person name="Shibuya K."/>
            <person name="Yoshizaki Y."/>
            <person name="Aoki N."/>
            <person name="Mitsuyama S."/>
            <person name="Roe B.A."/>
            <person name="Chen F."/>
            <person name="Chu L."/>
            <person name="Crabtree J."/>
            <person name="Deschamps S."/>
            <person name="Do A."/>
            <person name="Do T."/>
            <person name="Dorman A."/>
            <person name="Fang F."/>
            <person name="Fu Y."/>
            <person name="Hu P."/>
            <person name="Hua A."/>
            <person name="Kenton S."/>
            <person name="Lai H."/>
            <person name="Lao H.I."/>
            <person name="Lewis J."/>
            <person name="Lewis S."/>
            <person name="Lin S.-P."/>
            <person name="Loh P."/>
            <person name="Malaj E."/>
            <person name="Nguyen T."/>
            <person name="Pan H."/>
            <person name="Phan S."/>
            <person name="Qi S."/>
            <person name="Qian Y."/>
            <person name="Ray L."/>
            <person name="Ren Q."/>
            <person name="Shaull S."/>
            <person name="Sloan D."/>
            <person name="Song L."/>
            <person name="Wang Q."/>
            <person name="Wang Y."/>
            <person name="Wang Z."/>
            <person name="White J."/>
            <person name="Willingham D."/>
            <person name="Wu H."/>
            <person name="Yao Z."/>
            <person name="Zhan M."/>
            <person name="Zhang G."/>
            <person name="Chissoe S."/>
            <person name="Murray J."/>
            <person name="Miller N."/>
            <person name="Minx P."/>
            <person name="Fulton R."/>
            <person name="Johnson D."/>
            <person name="Bemis G."/>
            <person name="Bentley D."/>
            <person name="Bradshaw H."/>
            <person name="Bourne S."/>
            <person name="Cordes M."/>
            <person name="Du Z."/>
            <person name="Fulton L."/>
            <person name="Goela D."/>
            <person name="Graves T."/>
            <person name="Hawkins J."/>
            <person name="Hinds K."/>
            <person name="Kemp K."/>
            <person name="Latreille P."/>
            <person name="Layman D."/>
            <person name="Ozersky P."/>
            <person name="Rohlfing T."/>
            <person name="Scheet P."/>
            <person name="Walker C."/>
            <person name="Wamsley A."/>
            <person name="Wohldmann P."/>
            <person name="Pepin K."/>
            <person name="Nelson J."/>
            <person name="Korf I."/>
            <person name="Bedell J.A."/>
            <person name="Hillier L.W."/>
            <person name="Mardis E."/>
            <person name="Waterston R."/>
            <person name="Wilson R."/>
            <person name="Emanuel B.S."/>
            <person name="Shaikh T."/>
            <person name="Kurahashi H."/>
            <person name="Saitta S."/>
            <person name="Budarf M.L."/>
            <person name="McDermid H.E."/>
            <person name="Johnson A."/>
            <person name="Wong A.C.C."/>
            <person name="Morrow B.E."/>
            <person name="Edelmann L."/>
            <person name="Kim U.J."/>
            <person name="Shizuya H."/>
            <person name="Simon M.I."/>
            <person name="Dumanski J.P."/>
            <person name="Peyrard M."/>
            <person name="Kedra D."/>
            <person name="Seroussi E."/>
            <person name="Fransson I."/>
            <person name="Tapia I."/>
            <person name="Bruder C.E."/>
            <person name="O'Brien K.P."/>
            <person name="Wilkinson P."/>
            <person name="Bodenteich A."/>
            <person name="Hartman K."/>
            <person name="Hu X."/>
            <person name="Khan A.S."/>
            <person name="Lane L."/>
            <person name="Tilahun Y."/>
            <person name="Wright H."/>
        </authorList>
    </citation>
    <scope>NUCLEOTIDE SEQUENCE [LARGE SCALE GENOMIC DNA]</scope>
</reference>
<reference key="5">
    <citation type="submission" date="2005-07" db="EMBL/GenBank/DDBJ databases">
        <authorList>
            <person name="Mural R.J."/>
            <person name="Istrail S."/>
            <person name="Sutton G.G."/>
            <person name="Florea L."/>
            <person name="Halpern A.L."/>
            <person name="Mobarry C.M."/>
            <person name="Lippert R."/>
            <person name="Walenz B."/>
            <person name="Shatkay H."/>
            <person name="Dew I."/>
            <person name="Miller J.R."/>
            <person name="Flanigan M.J."/>
            <person name="Edwards N.J."/>
            <person name="Bolanos R."/>
            <person name="Fasulo D."/>
            <person name="Halldorsson B.V."/>
            <person name="Hannenhalli S."/>
            <person name="Turner R."/>
            <person name="Yooseph S."/>
            <person name="Lu F."/>
            <person name="Nusskern D.R."/>
            <person name="Shue B.C."/>
            <person name="Zheng X.H."/>
            <person name="Zhong F."/>
            <person name="Delcher A.L."/>
            <person name="Huson D.H."/>
            <person name="Kravitz S.A."/>
            <person name="Mouchard L."/>
            <person name="Reinert K."/>
            <person name="Remington K.A."/>
            <person name="Clark A.G."/>
            <person name="Waterman M.S."/>
            <person name="Eichler E.E."/>
            <person name="Adams M.D."/>
            <person name="Hunkapiller M.W."/>
            <person name="Myers E.W."/>
            <person name="Venter J.C."/>
        </authorList>
    </citation>
    <scope>NUCLEOTIDE SEQUENCE [LARGE SCALE GENOMIC DNA]</scope>
</reference>
<reference key="6">
    <citation type="journal article" date="2004" name="Genome Res.">
        <title>The status, quality, and expansion of the NIH full-length cDNA project: the Mammalian Gene Collection (MGC).</title>
        <authorList>
            <consortium name="The MGC Project Team"/>
        </authorList>
    </citation>
    <scope>NUCLEOTIDE SEQUENCE [LARGE SCALE MRNA]</scope>
    <source>
        <tissue>Skin</tissue>
    </source>
</reference>
<feature type="chain" id="PRO_0000221089" description="UPF0193 protein EVG1">
    <location>
        <begin position="1"/>
        <end position="217"/>
    </location>
</feature>
<feature type="sequence variant" id="VAR_057346" description="In dbSNP:rs35562630.">
    <original>M</original>
    <variation>L</variation>
    <location>
        <position position="136"/>
    </location>
</feature>
<feature type="sequence conflict" description="In Ref. 2; BAB71442." evidence="1" ref="2">
    <original>L</original>
    <variation>F</variation>
    <location>
        <position position="33"/>
    </location>
</feature>